<comment type="function">
    <text evidence="1">Required for maturation of 30S ribosomal subunits.</text>
</comment>
<comment type="subcellular location">
    <subcellularLocation>
        <location evidence="1">Cytoplasm</location>
    </subcellularLocation>
</comment>
<comment type="similarity">
    <text evidence="1">Belongs to the RimP family.</text>
</comment>
<organism>
    <name type="scientific">Dechloromonas aromatica (strain RCB)</name>
    <dbReference type="NCBI Taxonomy" id="159087"/>
    <lineage>
        <taxon>Bacteria</taxon>
        <taxon>Pseudomonadati</taxon>
        <taxon>Pseudomonadota</taxon>
        <taxon>Betaproteobacteria</taxon>
        <taxon>Rhodocyclales</taxon>
        <taxon>Azonexaceae</taxon>
        <taxon>Dechloromonas</taxon>
    </lineage>
</organism>
<keyword id="KW-0963">Cytoplasm</keyword>
<keyword id="KW-0690">Ribosome biogenesis</keyword>
<evidence type="ECO:0000255" key="1">
    <source>
        <dbReference type="HAMAP-Rule" id="MF_01077"/>
    </source>
</evidence>
<gene>
    <name evidence="1" type="primary">rimP</name>
    <name type="ordered locus">Daro_2454</name>
</gene>
<dbReference type="EMBL" id="CP000089">
    <property type="protein sequence ID" value="AAZ47189.1"/>
    <property type="molecule type" value="Genomic_DNA"/>
</dbReference>
<dbReference type="SMR" id="Q47D92"/>
<dbReference type="STRING" id="159087.Daro_2454"/>
<dbReference type="KEGG" id="dar:Daro_2454"/>
<dbReference type="eggNOG" id="COG0779">
    <property type="taxonomic scope" value="Bacteria"/>
</dbReference>
<dbReference type="HOGENOM" id="CLU_070525_1_0_4"/>
<dbReference type="GO" id="GO:0005829">
    <property type="term" value="C:cytosol"/>
    <property type="evidence" value="ECO:0007669"/>
    <property type="project" value="TreeGrafter"/>
</dbReference>
<dbReference type="GO" id="GO:0000028">
    <property type="term" value="P:ribosomal small subunit assembly"/>
    <property type="evidence" value="ECO:0007669"/>
    <property type="project" value="TreeGrafter"/>
</dbReference>
<dbReference type="GO" id="GO:0006412">
    <property type="term" value="P:translation"/>
    <property type="evidence" value="ECO:0007669"/>
    <property type="project" value="TreeGrafter"/>
</dbReference>
<dbReference type="CDD" id="cd01734">
    <property type="entry name" value="YlxS_C"/>
    <property type="match status" value="1"/>
</dbReference>
<dbReference type="Gene3D" id="2.30.30.180">
    <property type="entry name" value="Ribosome maturation factor RimP, C-terminal domain"/>
    <property type="match status" value="1"/>
</dbReference>
<dbReference type="Gene3D" id="3.30.300.70">
    <property type="entry name" value="RimP-like superfamily, N-terminal"/>
    <property type="match status" value="1"/>
</dbReference>
<dbReference type="HAMAP" id="MF_01077">
    <property type="entry name" value="RimP"/>
    <property type="match status" value="1"/>
</dbReference>
<dbReference type="InterPro" id="IPR003728">
    <property type="entry name" value="Ribosome_maturation_RimP"/>
</dbReference>
<dbReference type="InterPro" id="IPR028998">
    <property type="entry name" value="RimP_C"/>
</dbReference>
<dbReference type="InterPro" id="IPR036847">
    <property type="entry name" value="RimP_C_sf"/>
</dbReference>
<dbReference type="InterPro" id="IPR028989">
    <property type="entry name" value="RimP_N"/>
</dbReference>
<dbReference type="InterPro" id="IPR035956">
    <property type="entry name" value="RimP_N_sf"/>
</dbReference>
<dbReference type="NCBIfam" id="NF000929">
    <property type="entry name" value="PRK00092.2-1"/>
    <property type="match status" value="1"/>
</dbReference>
<dbReference type="PANTHER" id="PTHR33867">
    <property type="entry name" value="RIBOSOME MATURATION FACTOR RIMP"/>
    <property type="match status" value="1"/>
</dbReference>
<dbReference type="PANTHER" id="PTHR33867:SF1">
    <property type="entry name" value="RIBOSOME MATURATION FACTOR RIMP"/>
    <property type="match status" value="1"/>
</dbReference>
<dbReference type="Pfam" id="PF17384">
    <property type="entry name" value="DUF150_C"/>
    <property type="match status" value="1"/>
</dbReference>
<dbReference type="Pfam" id="PF02576">
    <property type="entry name" value="RimP_N"/>
    <property type="match status" value="1"/>
</dbReference>
<dbReference type="SUPFAM" id="SSF74942">
    <property type="entry name" value="YhbC-like, C-terminal domain"/>
    <property type="match status" value="1"/>
</dbReference>
<dbReference type="SUPFAM" id="SSF75420">
    <property type="entry name" value="YhbC-like, N-terminal domain"/>
    <property type="match status" value="1"/>
</dbReference>
<protein>
    <recommendedName>
        <fullName evidence="1">Ribosome maturation factor RimP</fullName>
    </recommendedName>
</protein>
<reference key="1">
    <citation type="journal article" date="2009" name="BMC Genomics">
        <title>Metabolic analysis of the soil microbe Dechloromonas aromatica str. RCB: indications of a surprisingly complex life-style and cryptic anaerobic pathways for aromatic degradation.</title>
        <authorList>
            <person name="Salinero K.K."/>
            <person name="Keller K."/>
            <person name="Feil W.S."/>
            <person name="Feil H."/>
            <person name="Trong S."/>
            <person name="Di Bartolo G."/>
            <person name="Lapidus A."/>
        </authorList>
    </citation>
    <scope>NUCLEOTIDE SEQUENCE [LARGE SCALE GENOMIC DNA]</scope>
    <source>
        <strain>RCB</strain>
    </source>
</reference>
<proteinExistence type="inferred from homology"/>
<sequence>MDLNTLLETTVVGLGYELVDVEMSPRGRTIRVFIDAPAKETGIDVEDCAKVSNQLTRVFEVENFDFDRLEISSPGLDRVVKKAADFERFSGQEIQIKVRIPQGGRRNFQGELLGLKDGKVGLRLAKDDVELEFTNIEKARLVPRFD</sequence>
<feature type="chain" id="PRO_0000229234" description="Ribosome maturation factor RimP">
    <location>
        <begin position="1"/>
        <end position="146"/>
    </location>
</feature>
<accession>Q47D92</accession>
<name>RIMP_DECAR</name>